<accession>P70758</accession>
<dbReference type="EC" id="7.1.1.6" evidence="1"/>
<dbReference type="EMBL" id="U72238">
    <property type="protein sequence ID" value="AAB52987.1"/>
    <property type="molecule type" value="Genomic_DNA"/>
</dbReference>
<dbReference type="EMBL" id="AJ319649">
    <property type="protein sequence ID" value="CAC39609.1"/>
    <property type="molecule type" value="Genomic_DNA"/>
</dbReference>
<dbReference type="EMBL" id="BA000019">
    <property type="protein sequence ID" value="BAB77878.1"/>
    <property type="molecule type" value="Genomic_DNA"/>
</dbReference>
<dbReference type="PIR" id="AC1995">
    <property type="entry name" value="AC1995"/>
</dbReference>
<dbReference type="SMR" id="P70758"/>
<dbReference type="STRING" id="103690.gene:10493526"/>
<dbReference type="TCDB" id="3.D.3.5.6">
    <property type="family name" value="the proton-translocating quinol:cytochrome c reductase (qcr) superfamily"/>
</dbReference>
<dbReference type="KEGG" id="ana:all1512"/>
<dbReference type="eggNOG" id="COG0723">
    <property type="taxonomic scope" value="Bacteria"/>
</dbReference>
<dbReference type="OrthoDB" id="9767869at2"/>
<dbReference type="Proteomes" id="UP000002483">
    <property type="component" value="Chromosome"/>
</dbReference>
<dbReference type="GO" id="GO:0031676">
    <property type="term" value="C:plasma membrane-derived thylakoid membrane"/>
    <property type="evidence" value="ECO:0007669"/>
    <property type="project" value="UniProtKB-SubCell"/>
</dbReference>
<dbReference type="GO" id="GO:0051537">
    <property type="term" value="F:2 iron, 2 sulfur cluster binding"/>
    <property type="evidence" value="ECO:0007669"/>
    <property type="project" value="UniProtKB-KW"/>
</dbReference>
<dbReference type="GO" id="GO:0045158">
    <property type="term" value="F:electron transporter, transferring electrons within cytochrome b6/f complex of photosystem II activity"/>
    <property type="evidence" value="ECO:0007669"/>
    <property type="project" value="UniProtKB-UniRule"/>
</dbReference>
<dbReference type="GO" id="GO:0046872">
    <property type="term" value="F:metal ion binding"/>
    <property type="evidence" value="ECO:0007669"/>
    <property type="project" value="UniProtKB-KW"/>
</dbReference>
<dbReference type="GO" id="GO:0004497">
    <property type="term" value="F:monooxygenase activity"/>
    <property type="evidence" value="ECO:0007669"/>
    <property type="project" value="UniProtKB-ARBA"/>
</dbReference>
<dbReference type="GO" id="GO:0016705">
    <property type="term" value="F:oxidoreductase activity, acting on paired donors, with incorporation or reduction of molecular oxygen"/>
    <property type="evidence" value="ECO:0007669"/>
    <property type="project" value="UniProtKB-ARBA"/>
</dbReference>
<dbReference type="GO" id="GO:0009496">
    <property type="term" value="F:plastoquinol--plastocyanin reductase activity"/>
    <property type="evidence" value="ECO:0007669"/>
    <property type="project" value="UniProtKB-UniRule"/>
</dbReference>
<dbReference type="GO" id="GO:0015979">
    <property type="term" value="P:photosynthesis"/>
    <property type="evidence" value="ECO:0007669"/>
    <property type="project" value="UniProtKB-UniRule"/>
</dbReference>
<dbReference type="CDD" id="cd03471">
    <property type="entry name" value="Rieske_cytochrome_b6f"/>
    <property type="match status" value="1"/>
</dbReference>
<dbReference type="Gene3D" id="2.102.10.10">
    <property type="entry name" value="Rieske [2Fe-2S] iron-sulphur domain"/>
    <property type="match status" value="1"/>
</dbReference>
<dbReference type="Gene3D" id="1.20.5.700">
    <property type="entry name" value="Single helix bin"/>
    <property type="match status" value="1"/>
</dbReference>
<dbReference type="HAMAP" id="MF_01335">
    <property type="entry name" value="Cytb6_f_Rieske"/>
    <property type="match status" value="1"/>
</dbReference>
<dbReference type="InterPro" id="IPR023960">
    <property type="entry name" value="Cyt_b6_f_Rieske"/>
</dbReference>
<dbReference type="InterPro" id="IPR017941">
    <property type="entry name" value="Rieske_2Fe-2S"/>
</dbReference>
<dbReference type="InterPro" id="IPR036922">
    <property type="entry name" value="Rieske_2Fe-2S_sf"/>
</dbReference>
<dbReference type="InterPro" id="IPR014349">
    <property type="entry name" value="Rieske_Fe-S_prot"/>
</dbReference>
<dbReference type="InterPro" id="IPR005805">
    <property type="entry name" value="Rieske_Fe-S_prot_C"/>
</dbReference>
<dbReference type="InterPro" id="IPR006311">
    <property type="entry name" value="TAT_signal"/>
</dbReference>
<dbReference type="NCBIfam" id="NF045928">
    <property type="entry name" value="Cytb6fFeSPetC"/>
    <property type="match status" value="1"/>
</dbReference>
<dbReference type="NCBIfam" id="NF010001">
    <property type="entry name" value="PRK13474.1"/>
    <property type="match status" value="1"/>
</dbReference>
<dbReference type="PANTHER" id="PTHR10134">
    <property type="entry name" value="CYTOCHROME B-C1 COMPLEX SUBUNIT RIESKE, MITOCHONDRIAL"/>
    <property type="match status" value="1"/>
</dbReference>
<dbReference type="Pfam" id="PF00355">
    <property type="entry name" value="Rieske"/>
    <property type="match status" value="1"/>
</dbReference>
<dbReference type="Pfam" id="PF25471">
    <property type="entry name" value="TM_PetC"/>
    <property type="match status" value="1"/>
</dbReference>
<dbReference type="PRINTS" id="PR00162">
    <property type="entry name" value="RIESKE"/>
</dbReference>
<dbReference type="SUPFAM" id="SSF50022">
    <property type="entry name" value="ISP domain"/>
    <property type="match status" value="1"/>
</dbReference>
<dbReference type="PROSITE" id="PS51296">
    <property type="entry name" value="RIESKE"/>
    <property type="match status" value="1"/>
</dbReference>
<dbReference type="PROSITE" id="PS51318">
    <property type="entry name" value="TAT"/>
    <property type="match status" value="1"/>
</dbReference>
<proteinExistence type="inferred from homology"/>
<organism>
    <name type="scientific">Nostoc sp. (strain PCC 7120 / SAG 25.82 / UTEX 2576)</name>
    <dbReference type="NCBI Taxonomy" id="103690"/>
    <lineage>
        <taxon>Bacteria</taxon>
        <taxon>Bacillati</taxon>
        <taxon>Cyanobacteriota</taxon>
        <taxon>Cyanophyceae</taxon>
        <taxon>Nostocales</taxon>
        <taxon>Nostocaceae</taxon>
        <taxon>Nostoc</taxon>
    </lineage>
</organism>
<evidence type="ECO:0000255" key="1">
    <source>
        <dbReference type="HAMAP-Rule" id="MF_01335"/>
    </source>
</evidence>
<sequence>MDNSIPIESPSLSRRQLLNFITGATVAVTAGAALYPAGKFLIAPAEKTGAGGAILAKDILGKQIPASQILAEPPQTRALVAGLAGEPTYLIVKEDHTLDRIGLVDNCTHLGCTFPWNPLDQQFQCPCHGSRYAPDGSVVRGPAPLPLKIVQVAVIDNSILISPWTETDPRTGKKPWWV</sequence>
<keyword id="KW-0001">2Fe-2S</keyword>
<keyword id="KW-1015">Disulfide bond</keyword>
<keyword id="KW-0249">Electron transport</keyword>
<keyword id="KW-0408">Iron</keyword>
<keyword id="KW-0411">Iron-sulfur</keyword>
<keyword id="KW-0472">Membrane</keyword>
<keyword id="KW-0479">Metal-binding</keyword>
<keyword id="KW-1185">Reference proteome</keyword>
<keyword id="KW-0793">Thylakoid</keyword>
<keyword id="KW-1278">Translocase</keyword>
<keyword id="KW-0812">Transmembrane</keyword>
<keyword id="KW-1133">Transmembrane helix</keyword>
<keyword id="KW-0813">Transport</keyword>
<protein>
    <recommendedName>
        <fullName evidence="1">Cytochrome b6-f complex iron-sulfur subunit 3</fullName>
        <ecNumber evidence="1">7.1.1.6</ecNumber>
    </recommendedName>
    <alternativeName>
        <fullName evidence="1">Plastohydroquinone:plastocyanin oxidoreductase iron-sulfur protein 3</fullName>
        <shortName evidence="1">ISP 3</shortName>
        <shortName evidence="1">RISP 3</shortName>
    </alternativeName>
    <alternativeName>
        <fullName evidence="1">Rieske iron-sulfur protein 3</fullName>
    </alternativeName>
</protein>
<gene>
    <name evidence="1" type="primary">petC3</name>
    <name type="synonym">petC4</name>
    <name type="ordered locus">all1512</name>
</gene>
<feature type="chain" id="PRO_0000127769" description="Cytochrome b6-f complex iron-sulfur subunit 3">
    <location>
        <begin position="1"/>
        <end position="178"/>
    </location>
</feature>
<feature type="transmembrane region" description="Helical" evidence="1">
    <location>
        <begin position="20"/>
        <end position="42"/>
    </location>
</feature>
<feature type="domain" description="Rieske" evidence="1">
    <location>
        <begin position="65"/>
        <end position="161"/>
    </location>
</feature>
<feature type="binding site" evidence="1">
    <location>
        <position position="107"/>
    </location>
    <ligand>
        <name>[2Fe-2S] cluster</name>
        <dbReference type="ChEBI" id="CHEBI:190135"/>
    </ligand>
</feature>
<feature type="binding site" evidence="1">
    <location>
        <position position="109"/>
    </location>
    <ligand>
        <name>[2Fe-2S] cluster</name>
        <dbReference type="ChEBI" id="CHEBI:190135"/>
    </ligand>
</feature>
<feature type="binding site" evidence="1">
    <location>
        <position position="125"/>
    </location>
    <ligand>
        <name>[2Fe-2S] cluster</name>
        <dbReference type="ChEBI" id="CHEBI:190135"/>
    </ligand>
</feature>
<feature type="binding site" evidence="1">
    <location>
        <position position="128"/>
    </location>
    <ligand>
        <name>[2Fe-2S] cluster</name>
        <dbReference type="ChEBI" id="CHEBI:190135"/>
    </ligand>
</feature>
<feature type="disulfide bond" evidence="1">
    <location>
        <begin position="112"/>
        <end position="127"/>
    </location>
</feature>
<reference key="1">
    <citation type="journal article" date="1997" name="Mol. Microbiol.">
        <title>Cell-type specificity of the Anabaena fdxN-element rearrangement requires xisH and xisI.</title>
        <authorList>
            <person name="Ramaswamy K.S."/>
            <person name="Carrasco C.D."/>
            <person name="Fatma T."/>
            <person name="Golden J.W."/>
        </authorList>
    </citation>
    <scope>NUCLEOTIDE SEQUENCE [GENOMIC DNA]</scope>
</reference>
<reference key="2">
    <citation type="submission" date="2001-05" db="EMBL/GenBank/DDBJ databases">
        <title>b6f complex of Anabaena sp; possible function of alternative Rieske-FeS proteins.</title>
        <authorList>
            <person name="Arnold M."/>
        </authorList>
    </citation>
    <scope>NUCLEOTIDE SEQUENCE [GENOMIC DNA]</scope>
</reference>
<reference key="3">
    <citation type="journal article" date="2001" name="DNA Res.">
        <title>Complete genomic sequence of the filamentous nitrogen-fixing cyanobacterium Anabaena sp. strain PCC 7120.</title>
        <authorList>
            <person name="Kaneko T."/>
            <person name="Nakamura Y."/>
            <person name="Wolk C.P."/>
            <person name="Kuritz T."/>
            <person name="Sasamoto S."/>
            <person name="Watanabe A."/>
            <person name="Iriguchi M."/>
            <person name="Ishikawa A."/>
            <person name="Kawashima K."/>
            <person name="Kimura T."/>
            <person name="Kishida Y."/>
            <person name="Kohara M."/>
            <person name="Matsumoto M."/>
            <person name="Matsuno A."/>
            <person name="Muraki A."/>
            <person name="Nakazaki N."/>
            <person name="Shimpo S."/>
            <person name="Sugimoto M."/>
            <person name="Takazawa M."/>
            <person name="Yamada M."/>
            <person name="Yasuda M."/>
            <person name="Tabata S."/>
        </authorList>
    </citation>
    <scope>NUCLEOTIDE SEQUENCE [LARGE SCALE GENOMIC DNA]</scope>
    <source>
        <strain>PCC 7120 / SAG 25.82 / UTEX 2576</strain>
    </source>
</reference>
<comment type="function">
    <text evidence="1">Component of the cytochrome b6-f complex, which mediates electron transfer between photosystem II (PSII) and photosystem I (PSI), cyclic electron flow around PSI, and state transitions.</text>
</comment>
<comment type="catalytic activity">
    <reaction evidence="1">
        <text>2 oxidized [plastocyanin] + a plastoquinol + 2 H(+)(in) = 2 reduced [plastocyanin] + a plastoquinone + 4 H(+)(out)</text>
        <dbReference type="Rhea" id="RHEA:22148"/>
        <dbReference type="Rhea" id="RHEA-COMP:9561"/>
        <dbReference type="Rhea" id="RHEA-COMP:9562"/>
        <dbReference type="Rhea" id="RHEA-COMP:10039"/>
        <dbReference type="Rhea" id="RHEA-COMP:10040"/>
        <dbReference type="ChEBI" id="CHEBI:15378"/>
        <dbReference type="ChEBI" id="CHEBI:17757"/>
        <dbReference type="ChEBI" id="CHEBI:29036"/>
        <dbReference type="ChEBI" id="CHEBI:49552"/>
        <dbReference type="ChEBI" id="CHEBI:62192"/>
        <dbReference type="EC" id="7.1.1.6"/>
    </reaction>
</comment>
<comment type="cofactor">
    <cofactor evidence="1">
        <name>[2Fe-2S] cluster</name>
        <dbReference type="ChEBI" id="CHEBI:190135"/>
    </cofactor>
    <text evidence="1">Binds 1 [2Fe-2S] cluster per subunit.</text>
</comment>
<comment type="subunit">
    <text evidence="1">The 4 large subunits of the cytochrome b6-f complex are cytochrome b6, subunit IV (17 kDa polypeptide, PetD), cytochrome f and the Rieske protein, while the 4 small subunits are PetG, PetL, PetM and PetN. The complex functions as a dimer.</text>
</comment>
<comment type="subcellular location">
    <subcellularLocation>
        <location evidence="1">Cellular thylakoid membrane</location>
        <topology evidence="1">Single-pass membrane protein</topology>
    </subcellularLocation>
    <text evidence="1">The transmembrane helix obliquely spans the membrane in one monomer, and its extrinsic C-terminal domain is part of the other monomer.</text>
</comment>
<comment type="miscellaneous">
    <text>The Rieske iron-sulfur protein is a high potential 2Fe-2S protein.</text>
</comment>
<comment type="similarity">
    <text evidence="1">Belongs to the Rieske iron-sulfur protein family.</text>
</comment>
<name>UCRIC_NOSS1</name>